<protein>
    <recommendedName>
        <fullName>Helicase SWR1</fullName>
        <ecNumber>3.6.4.12</ecNumber>
    </recommendedName>
</protein>
<name>SWR1_CANAL</name>
<keyword id="KW-0010">Activator</keyword>
<keyword id="KW-0067">ATP-binding</keyword>
<keyword id="KW-0156">Chromatin regulator</keyword>
<keyword id="KW-0175">Coiled coil</keyword>
<keyword id="KW-0238">DNA-binding</keyword>
<keyword id="KW-0347">Helicase</keyword>
<keyword id="KW-0378">Hydrolase</keyword>
<keyword id="KW-0547">Nucleotide-binding</keyword>
<keyword id="KW-0539">Nucleus</keyword>
<keyword id="KW-1185">Reference proteome</keyword>
<keyword id="KW-0804">Transcription</keyword>
<keyword id="KW-0805">Transcription regulation</keyword>
<sequence length="1641" mass="187725">MPENGRLRRTSARLTQNGTSTSSSTIYQNGKRTSQHAQETSTASNKKRKVSTQSKEDKLSDIIVDFNLAVNELYQLKEYKSIISWDPIENSSANDRGIKAEFEEFVKNNDYRLVWDKEIENNSNIDSLPLRFQKKKLAEQNKLLDDKFSIRQNVLASSKMLEESLVNKTRDEVKIESTFKAIQSQEKAGSKLKTPSQTSNAKTNIRKSGSTTPKRGNENGSRKQALEDQDEIIELSDDSSVVEIESDLSDAETHYRIKCIKKTVPPPLVTHPSHIPQWRPENLEDGNRSTGRLIQLKDSSSSSKIINFDPTPLEIIQLKDEVIAAPKLTEKLQNFLNNDFKTPIIDESNVPDYNFTRDEYNTIMSQQEKLLRKLYHKVNIENSLELNGDKIERRKVILPQSNIKLTDPFRNTFSVKPKLHGAANNATHQDYLLAQGMAFSKVHQQMRKQHHLRTRKIAAMIDQHFKKKKGEKERLAKEREQNLKKMSRLTMQAVKKRWNQAQKVYQIIQNEKEEELKKIKGRQHLSEMLEHSTQLLEAQLTSSREPTVEAESDDNSTTFDDNTNDSDNFSSSEEEENEEDNTQQQINGNKKYDVNGKSNDENDMSLSVEELRKKYADLETSVEPLSSNVTSDKERESETSSEDAESSDDDDTDVTRGLASLYQNDEVADFATTTFEYSAEEKKLIEDLNQESDSRMNSLLDSDSVSSISDSESSEESSSDTEMDQSNVSEPPRSSETGSNTGLASLFTNGTIVSDEEDDASISSNFENESDESMNSSDRELEVNGNGKIDKIASTDEDDSNVEIVNGSKVKDVPIPSLLRGTLRPYQKQGLNWLASLYNNNTNGILADEMGLGKTIQTISLLAYLACEHHKWGPHLIIVPTSVMLNWEMEFKKFAPGFKVLTYYGSPQQRAQKRKGWNKPDAFHVCITSYQLVVQDQQSFKRRRWTYMILDEAHNIKNFRSTRWRALLNFNTENRLLLTGTPLQNNLMELWSLLYFLMPSSKVNQAMPEGFANLDDFQQWFGKPVDRILEQTSAGNSDLIDENERTTQKMDEETRNTVARLHQVLRPYLLRRLKKDVEKQMPGKYEHIVYCRLSKRQRFLYDDFMSRAKTKETLASGNFLSIINCLMQLRKVCNHPDLFEVRPIVTSFAMPRSIPSYYQSTNELVKRQFNKDEKVSFQALNLDVTGCENMNYFVCQSTGKLMTTEPFQDQINKLKILLVEFENSDPINYVSYYQRLRREEQAEIKEKLEHVVYLNNLRCGRKPIYGESLLRLLTVNAHDFSDEPYNKYCLTLSGRVDKMNDTIEKYSIITPAAVALDMKDQLIPISTKQRILHEVAENKIDNPFHKAQVKLSIAFPDKTLLQYDCGKLQKLATLLQELTSQGHRALIFTQMTKVLDILEQFLNIHGYRYMRLDGATKIEDRQLLTEKFNRDPKIPVFILSTRSGGLGINLTGADTVIFYDSDWNPAMDKQCQDRCHRIGQVRDVHIYRFVSEYTIESNIIKKANQKRQLDNVVIQEGEFTTDYFGKFSVRDLVSDSNIGKEITDRTIDFSGDAKMGNVLAQAEDEEDRVAAGAALKEVAIDDDDFKEETRSATTGATPAPTETNALSTTDGDAAFIDVDYEDGIGHIDEYMLRFISDGYYL</sequence>
<reference key="1">
    <citation type="journal article" date="2004" name="Proc. Natl. Acad. Sci. U.S.A.">
        <title>The diploid genome sequence of Candida albicans.</title>
        <authorList>
            <person name="Jones T."/>
            <person name="Federspiel N.A."/>
            <person name="Chibana H."/>
            <person name="Dungan J."/>
            <person name="Kalman S."/>
            <person name="Magee B.B."/>
            <person name="Newport G."/>
            <person name="Thorstenson Y.R."/>
            <person name="Agabian N."/>
            <person name="Magee P.T."/>
            <person name="Davis R.W."/>
            <person name="Scherer S."/>
        </authorList>
    </citation>
    <scope>NUCLEOTIDE SEQUENCE [LARGE SCALE GENOMIC DNA]</scope>
    <source>
        <strain>SC5314 / ATCC MYA-2876</strain>
    </source>
</reference>
<reference key="2">
    <citation type="journal article" date="2007" name="Genome Biol.">
        <title>Assembly of the Candida albicans genome into sixteen supercontigs aligned on the eight chromosomes.</title>
        <authorList>
            <person name="van het Hoog M."/>
            <person name="Rast T.J."/>
            <person name="Martchenko M."/>
            <person name="Grindle S."/>
            <person name="Dignard D."/>
            <person name="Hogues H."/>
            <person name="Cuomo C."/>
            <person name="Berriman M."/>
            <person name="Scherer S."/>
            <person name="Magee B.B."/>
            <person name="Whiteway M."/>
            <person name="Chibana H."/>
            <person name="Nantel A."/>
            <person name="Magee P.T."/>
        </authorList>
    </citation>
    <scope>GENOME REANNOTATION</scope>
    <source>
        <strain>SC5314 / ATCC MYA-2876</strain>
    </source>
</reference>
<reference key="3">
    <citation type="journal article" date="2013" name="Genome Biol.">
        <title>Assembly of a phased diploid Candida albicans genome facilitates allele-specific measurements and provides a simple model for repeat and indel structure.</title>
        <authorList>
            <person name="Muzzey D."/>
            <person name="Schwartz K."/>
            <person name="Weissman J.S."/>
            <person name="Sherlock G."/>
        </authorList>
    </citation>
    <scope>NUCLEOTIDE SEQUENCE [LARGE SCALE GENOMIC DNA]</scope>
    <scope>GENOME REANNOTATION</scope>
    <source>
        <strain>SC5314 / ATCC MYA-2876</strain>
    </source>
</reference>
<dbReference type="EC" id="3.6.4.12"/>
<dbReference type="EMBL" id="CP017624">
    <property type="protein sequence ID" value="AOW27754.1"/>
    <property type="molecule type" value="Genomic_DNA"/>
</dbReference>
<dbReference type="RefSeq" id="XP_713128.2">
    <property type="nucleotide sequence ID" value="XM_708035.2"/>
</dbReference>
<dbReference type="SMR" id="Q59U81"/>
<dbReference type="FunCoup" id="Q59U81">
    <property type="interactions" value="226"/>
</dbReference>
<dbReference type="STRING" id="237561.Q59U81"/>
<dbReference type="EnsemblFungi" id="C2_07560W_A-T">
    <property type="protein sequence ID" value="C2_07560W_A-T-p1"/>
    <property type="gene ID" value="C2_07560W_A"/>
</dbReference>
<dbReference type="GeneID" id="3645220"/>
<dbReference type="KEGG" id="cal:CAALFM_C207560WA"/>
<dbReference type="CGD" id="CAL0000190429">
    <property type="gene designation" value="SWR1"/>
</dbReference>
<dbReference type="VEuPathDB" id="FungiDB:C2_07560W_A"/>
<dbReference type="eggNOG" id="KOG0391">
    <property type="taxonomic scope" value="Eukaryota"/>
</dbReference>
<dbReference type="HOGENOM" id="CLU_000315_24_4_1"/>
<dbReference type="InParanoid" id="Q59U81"/>
<dbReference type="OrthoDB" id="372624at2759"/>
<dbReference type="PRO" id="PR:Q59U81"/>
<dbReference type="Proteomes" id="UP000000559">
    <property type="component" value="Chromosome 2"/>
</dbReference>
<dbReference type="GO" id="GO:0005829">
    <property type="term" value="C:cytosol"/>
    <property type="evidence" value="ECO:0007669"/>
    <property type="project" value="EnsemblFungi"/>
</dbReference>
<dbReference type="GO" id="GO:0000812">
    <property type="term" value="C:Swr1 complex"/>
    <property type="evidence" value="ECO:0000318"/>
    <property type="project" value="GO_Central"/>
</dbReference>
<dbReference type="GO" id="GO:0005524">
    <property type="term" value="F:ATP binding"/>
    <property type="evidence" value="ECO:0007669"/>
    <property type="project" value="UniProtKB-KW"/>
</dbReference>
<dbReference type="GO" id="GO:0016887">
    <property type="term" value="F:ATP hydrolysis activity"/>
    <property type="evidence" value="ECO:0000318"/>
    <property type="project" value="GO_Central"/>
</dbReference>
<dbReference type="GO" id="GO:0003677">
    <property type="term" value="F:DNA binding"/>
    <property type="evidence" value="ECO:0007669"/>
    <property type="project" value="UniProtKB-KW"/>
</dbReference>
<dbReference type="GO" id="GO:0004386">
    <property type="term" value="F:helicase activity"/>
    <property type="evidence" value="ECO:0007669"/>
    <property type="project" value="UniProtKB-KW"/>
</dbReference>
<dbReference type="GO" id="GO:0042393">
    <property type="term" value="F:histone binding"/>
    <property type="evidence" value="ECO:0000318"/>
    <property type="project" value="GO_Central"/>
</dbReference>
<dbReference type="GO" id="GO:0005198">
    <property type="term" value="F:structural molecule activity"/>
    <property type="evidence" value="ECO:0007669"/>
    <property type="project" value="EnsemblFungi"/>
</dbReference>
<dbReference type="GO" id="GO:0006338">
    <property type="term" value="P:chromatin remodeling"/>
    <property type="evidence" value="ECO:0000315"/>
    <property type="project" value="CGD"/>
</dbReference>
<dbReference type="GO" id="GO:0000725">
    <property type="term" value="P:recombinational repair"/>
    <property type="evidence" value="ECO:0007669"/>
    <property type="project" value="EnsemblFungi"/>
</dbReference>
<dbReference type="GO" id="GO:1900239">
    <property type="term" value="P:regulation of phenotypic switching"/>
    <property type="evidence" value="ECO:0000315"/>
    <property type="project" value="CGD"/>
</dbReference>
<dbReference type="CDD" id="cd18003">
    <property type="entry name" value="DEXQc_SRCAP"/>
    <property type="match status" value="1"/>
</dbReference>
<dbReference type="CDD" id="cd18793">
    <property type="entry name" value="SF2_C_SNF"/>
    <property type="match status" value="1"/>
</dbReference>
<dbReference type="FunFam" id="3.40.50.10810:FF:000005">
    <property type="entry name" value="Photoperiod-independent early flowering 1"/>
    <property type="match status" value="1"/>
</dbReference>
<dbReference type="FunFam" id="3.40.50.300:FF:000655">
    <property type="entry name" value="Protein PHOTOPERIOD-INDEPENDENT EARLY FLOWERING 1"/>
    <property type="match status" value="1"/>
</dbReference>
<dbReference type="FunFam" id="1.20.120.850:FF:000009">
    <property type="entry name" value="SNF2 family helicase/ATPase (Swr1)"/>
    <property type="match status" value="1"/>
</dbReference>
<dbReference type="Gene3D" id="3.40.50.300">
    <property type="entry name" value="P-loop containing nucleotide triphosphate hydrolases"/>
    <property type="match status" value="1"/>
</dbReference>
<dbReference type="Gene3D" id="1.20.120.850">
    <property type="entry name" value="SWI2/SNF2 ATPases, N-terminal domain"/>
    <property type="match status" value="1"/>
</dbReference>
<dbReference type="Gene3D" id="3.40.50.10810">
    <property type="entry name" value="Tandem AAA-ATPase domain"/>
    <property type="match status" value="1"/>
</dbReference>
<dbReference type="InterPro" id="IPR014001">
    <property type="entry name" value="Helicase_ATP-bd"/>
</dbReference>
<dbReference type="InterPro" id="IPR001650">
    <property type="entry name" value="Helicase_C-like"/>
</dbReference>
<dbReference type="InterPro" id="IPR014012">
    <property type="entry name" value="HSA_dom"/>
</dbReference>
<dbReference type="InterPro" id="IPR050520">
    <property type="entry name" value="INO80/SWR1_helicase"/>
</dbReference>
<dbReference type="InterPro" id="IPR027417">
    <property type="entry name" value="P-loop_NTPase"/>
</dbReference>
<dbReference type="InterPro" id="IPR038718">
    <property type="entry name" value="SNF2-like_sf"/>
</dbReference>
<dbReference type="InterPro" id="IPR049730">
    <property type="entry name" value="SNF2/RAD54-like_C"/>
</dbReference>
<dbReference type="InterPro" id="IPR000330">
    <property type="entry name" value="SNF2_N"/>
</dbReference>
<dbReference type="PANTHER" id="PTHR45685:SF1">
    <property type="entry name" value="HELICASE SRCAP"/>
    <property type="match status" value="1"/>
</dbReference>
<dbReference type="PANTHER" id="PTHR45685">
    <property type="entry name" value="HELICASE SRCAP-RELATED"/>
    <property type="match status" value="1"/>
</dbReference>
<dbReference type="Pfam" id="PF00271">
    <property type="entry name" value="Helicase_C"/>
    <property type="match status" value="1"/>
</dbReference>
<dbReference type="Pfam" id="PF07529">
    <property type="entry name" value="HSA"/>
    <property type="match status" value="1"/>
</dbReference>
<dbReference type="Pfam" id="PF00176">
    <property type="entry name" value="SNF2-rel_dom"/>
    <property type="match status" value="1"/>
</dbReference>
<dbReference type="SMART" id="SM00487">
    <property type="entry name" value="DEXDc"/>
    <property type="match status" value="1"/>
</dbReference>
<dbReference type="SMART" id="SM00490">
    <property type="entry name" value="HELICc"/>
    <property type="match status" value="1"/>
</dbReference>
<dbReference type="SUPFAM" id="SSF52540">
    <property type="entry name" value="P-loop containing nucleoside triphosphate hydrolases"/>
    <property type="match status" value="2"/>
</dbReference>
<dbReference type="PROSITE" id="PS51192">
    <property type="entry name" value="HELICASE_ATP_BIND_1"/>
    <property type="match status" value="1"/>
</dbReference>
<dbReference type="PROSITE" id="PS51194">
    <property type="entry name" value="HELICASE_CTER"/>
    <property type="match status" value="1"/>
</dbReference>
<dbReference type="PROSITE" id="PS51204">
    <property type="entry name" value="HSA"/>
    <property type="match status" value="1"/>
</dbReference>
<evidence type="ECO:0000250" key="1"/>
<evidence type="ECO:0000255" key="2"/>
<evidence type="ECO:0000255" key="3">
    <source>
        <dbReference type="PROSITE-ProRule" id="PRU00541"/>
    </source>
</evidence>
<evidence type="ECO:0000255" key="4">
    <source>
        <dbReference type="PROSITE-ProRule" id="PRU00542"/>
    </source>
</evidence>
<evidence type="ECO:0000255" key="5">
    <source>
        <dbReference type="PROSITE-ProRule" id="PRU00549"/>
    </source>
</evidence>
<evidence type="ECO:0000256" key="6">
    <source>
        <dbReference type="SAM" id="MobiDB-lite"/>
    </source>
</evidence>
<evidence type="ECO:0000305" key="7"/>
<proteinExistence type="inferred from homology"/>
<accession>Q59U81</accession>
<accession>A0A1D8PHY5</accession>
<accession>Q59UC7</accession>
<gene>
    <name type="primary">SWR1</name>
    <name type="ordered locus">CAALFM_C207560WA</name>
    <name type="ORF">CaO19.1871</name>
    <name type="ORF">CaO19.9427</name>
</gene>
<feature type="chain" id="PRO_0000074364" description="Helicase SWR1">
    <location>
        <begin position="1"/>
        <end position="1641"/>
    </location>
</feature>
<feature type="domain" description="HSA" evidence="5">
    <location>
        <begin position="416"/>
        <end position="488"/>
    </location>
</feature>
<feature type="domain" description="Helicase ATP-binding" evidence="3">
    <location>
        <begin position="835"/>
        <end position="1000"/>
    </location>
</feature>
<feature type="domain" description="Helicase C-terminal" evidence="4">
    <location>
        <begin position="1367"/>
        <end position="1520"/>
    </location>
</feature>
<feature type="region of interest" description="Disordered" evidence="6">
    <location>
        <begin position="1"/>
        <end position="54"/>
    </location>
</feature>
<feature type="region of interest" description="Disordered" evidence="6">
    <location>
        <begin position="184"/>
        <end position="230"/>
    </location>
</feature>
<feature type="region of interest" description="Disordered" evidence="6">
    <location>
        <begin position="537"/>
        <end position="669"/>
    </location>
</feature>
<feature type="region of interest" description="Disordered" evidence="6">
    <location>
        <begin position="686"/>
        <end position="782"/>
    </location>
</feature>
<feature type="region of interest" description="Disordered" evidence="6">
    <location>
        <begin position="1586"/>
        <end position="1607"/>
    </location>
</feature>
<feature type="coiled-coil region" evidence="2">
    <location>
        <begin position="461"/>
        <end position="521"/>
    </location>
</feature>
<feature type="short sequence motif" description="DEAH box">
    <location>
        <begin position="951"/>
        <end position="954"/>
    </location>
</feature>
<feature type="compositionally biased region" description="Polar residues" evidence="6">
    <location>
        <begin position="12"/>
        <end position="44"/>
    </location>
</feature>
<feature type="compositionally biased region" description="Polar residues" evidence="6">
    <location>
        <begin position="184"/>
        <end position="214"/>
    </location>
</feature>
<feature type="compositionally biased region" description="Basic and acidic residues" evidence="6">
    <location>
        <begin position="215"/>
        <end position="226"/>
    </location>
</feature>
<feature type="compositionally biased region" description="Low complexity" evidence="6">
    <location>
        <begin position="555"/>
        <end position="571"/>
    </location>
</feature>
<feature type="compositionally biased region" description="Acidic residues" evidence="6">
    <location>
        <begin position="572"/>
        <end position="581"/>
    </location>
</feature>
<feature type="compositionally biased region" description="Basic and acidic residues" evidence="6">
    <location>
        <begin position="590"/>
        <end position="600"/>
    </location>
</feature>
<feature type="compositionally biased region" description="Acidic residues" evidence="6">
    <location>
        <begin position="639"/>
        <end position="652"/>
    </location>
</feature>
<feature type="compositionally biased region" description="Low complexity" evidence="6">
    <location>
        <begin position="701"/>
        <end position="711"/>
    </location>
</feature>
<feature type="compositionally biased region" description="Acidic residues" evidence="6">
    <location>
        <begin position="712"/>
        <end position="723"/>
    </location>
</feature>
<feature type="compositionally biased region" description="Polar residues" evidence="6">
    <location>
        <begin position="727"/>
        <end position="752"/>
    </location>
</feature>
<feature type="compositionally biased region" description="Low complexity" evidence="6">
    <location>
        <begin position="1591"/>
        <end position="1605"/>
    </location>
</feature>
<feature type="binding site" evidence="3">
    <location>
        <begin position="848"/>
        <end position="855"/>
    </location>
    <ligand>
        <name>ATP</name>
        <dbReference type="ChEBI" id="CHEBI:30616"/>
    </ligand>
</feature>
<comment type="function">
    <text evidence="1">Catalytic component of the SWR1 complex which mediates the ATP-dependent exchange of histone H2A for the H2A variant HZT1 leading to transcriptional regulation of selected genes by chromatin remodeling.</text>
</comment>
<comment type="catalytic activity">
    <reaction>
        <text>ATP + H2O = ADP + phosphate + H(+)</text>
        <dbReference type="Rhea" id="RHEA:13065"/>
        <dbReference type="ChEBI" id="CHEBI:15377"/>
        <dbReference type="ChEBI" id="CHEBI:15378"/>
        <dbReference type="ChEBI" id="CHEBI:30616"/>
        <dbReference type="ChEBI" id="CHEBI:43474"/>
        <dbReference type="ChEBI" id="CHEBI:456216"/>
        <dbReference type="EC" id="3.6.4.12"/>
    </reaction>
</comment>
<comment type="subunit">
    <text evidence="1">Component of the SWR1 chromatin-remodeling complex.</text>
</comment>
<comment type="subcellular location">
    <subcellularLocation>
        <location evidence="5">Nucleus</location>
    </subcellularLocation>
</comment>
<comment type="similarity">
    <text evidence="7">Belongs to the SNF2/RAD54 helicase family. SWR1 subfamily.</text>
</comment>
<organism>
    <name type="scientific">Candida albicans (strain SC5314 / ATCC MYA-2876)</name>
    <name type="common">Yeast</name>
    <dbReference type="NCBI Taxonomy" id="237561"/>
    <lineage>
        <taxon>Eukaryota</taxon>
        <taxon>Fungi</taxon>
        <taxon>Dikarya</taxon>
        <taxon>Ascomycota</taxon>
        <taxon>Saccharomycotina</taxon>
        <taxon>Pichiomycetes</taxon>
        <taxon>Debaryomycetaceae</taxon>
        <taxon>Candida/Lodderomyces clade</taxon>
        <taxon>Candida</taxon>
    </lineage>
</organism>